<name>COX2_ALBTU</name>
<reference key="1">
    <citation type="journal article" date="1994" name="J. Mol. Evol.">
        <title>Novel features of metazoan mtDNA revealed from sequence analysis of three mitochondrial DNA segments of the land snail Albinaria turrita (Gastropoda: Clausiliidae).</title>
        <authorList>
            <person name="Lecanidou R."/>
            <person name="Douris V."/>
            <person name="Rodakis G.C."/>
        </authorList>
    </citation>
    <scope>NUCLEOTIDE SEQUENCE [GENOMIC DNA]</scope>
</reference>
<comment type="function">
    <text evidence="1">Component of the cytochrome c oxidase, the last enzyme in the mitochondrial electron transport chain which drives oxidative phosphorylation. The respiratory chain contains 3 multisubunit complexes succinate dehydrogenase (complex II, CII), ubiquinol-cytochrome c oxidoreductase (cytochrome b-c1 complex, complex III, CIII) and cytochrome c oxidase (complex IV, CIV), that cooperate to transfer electrons derived from NADH and succinate to molecular oxygen, creating an electrochemical gradient over the inner membrane that drives transmembrane transport and the ATP synthase. Cytochrome c oxidase is the component of the respiratory chain that catalyzes the reduction of oxygen to water. Electrons originating from reduced cytochrome c in the intermembrane space (IMS) are transferred via the dinuclear copper A center (CU(A)) of subunit 2 and heme A of subunit 1 to the active site in subunit 1, a binuclear center (BNC) formed by heme A3 and copper B (CU(B)). The BNC reduces molecular oxygen to 2 water molecules using 4 electrons from cytochrome c in the IMS and 4 protons from the mitochondrial matrix.</text>
</comment>
<comment type="catalytic activity">
    <reaction evidence="1">
        <text>4 Fe(II)-[cytochrome c] + O2 + 8 H(+)(in) = 4 Fe(III)-[cytochrome c] + 2 H2O + 4 H(+)(out)</text>
        <dbReference type="Rhea" id="RHEA:11436"/>
        <dbReference type="Rhea" id="RHEA-COMP:10350"/>
        <dbReference type="Rhea" id="RHEA-COMP:14399"/>
        <dbReference type="ChEBI" id="CHEBI:15377"/>
        <dbReference type="ChEBI" id="CHEBI:15378"/>
        <dbReference type="ChEBI" id="CHEBI:15379"/>
        <dbReference type="ChEBI" id="CHEBI:29033"/>
        <dbReference type="ChEBI" id="CHEBI:29034"/>
        <dbReference type="EC" id="7.1.1.9"/>
    </reaction>
    <physiologicalReaction direction="left-to-right" evidence="1">
        <dbReference type="Rhea" id="RHEA:11437"/>
    </physiologicalReaction>
</comment>
<comment type="cofactor">
    <cofactor evidence="1">
        <name>Cu cation</name>
        <dbReference type="ChEBI" id="CHEBI:23378"/>
    </cofactor>
    <text evidence="1">Binds a dinuclear copper A center per subunit.</text>
</comment>
<comment type="subunit">
    <text evidence="1">Component of the cytochrome c oxidase (complex IV, CIV), a multisubunit enzyme composed of a catalytic core of 3 subunits and several supernumerary subunits. The complex exists as a monomer or a dimer and forms supercomplexes (SCs) in the inner mitochondrial membrane with ubiquinol-cytochrome c oxidoreductase (cytochrome b-c1 complex, complex III, CIII).</text>
</comment>
<comment type="subcellular location">
    <subcellularLocation>
        <location evidence="1">Mitochondrion inner membrane</location>
        <topology evidence="1">Multi-pass membrane protein</topology>
    </subcellularLocation>
</comment>
<comment type="similarity">
    <text evidence="3">Belongs to the cytochrome c oxidase subunit 2 family.</text>
</comment>
<dbReference type="EC" id="7.1.1.9"/>
<dbReference type="EMBL" id="X71395">
    <property type="protein sequence ID" value="CAA50517.1"/>
    <property type="molecule type" value="Genomic_DNA"/>
</dbReference>
<dbReference type="SMR" id="Q09334"/>
<dbReference type="GO" id="GO:0005743">
    <property type="term" value="C:mitochondrial inner membrane"/>
    <property type="evidence" value="ECO:0007669"/>
    <property type="project" value="UniProtKB-SubCell"/>
</dbReference>
<dbReference type="GO" id="GO:0005507">
    <property type="term" value="F:copper ion binding"/>
    <property type="evidence" value="ECO:0007669"/>
    <property type="project" value="InterPro"/>
</dbReference>
<dbReference type="GO" id="GO:0004129">
    <property type="term" value="F:cytochrome-c oxidase activity"/>
    <property type="evidence" value="ECO:0007669"/>
    <property type="project" value="UniProtKB-EC"/>
</dbReference>
<dbReference type="GO" id="GO:0042773">
    <property type="term" value="P:ATP synthesis coupled electron transport"/>
    <property type="evidence" value="ECO:0007669"/>
    <property type="project" value="TreeGrafter"/>
</dbReference>
<dbReference type="CDD" id="cd13912">
    <property type="entry name" value="CcO_II_C"/>
    <property type="match status" value="1"/>
</dbReference>
<dbReference type="FunFam" id="2.60.40.420:FF:000001">
    <property type="entry name" value="Cytochrome c oxidase subunit 2"/>
    <property type="match status" value="1"/>
</dbReference>
<dbReference type="Gene3D" id="1.10.287.90">
    <property type="match status" value="1"/>
</dbReference>
<dbReference type="Gene3D" id="2.60.40.420">
    <property type="entry name" value="Cupredoxins - blue copper proteins"/>
    <property type="match status" value="1"/>
</dbReference>
<dbReference type="InterPro" id="IPR045187">
    <property type="entry name" value="CcO_II"/>
</dbReference>
<dbReference type="InterPro" id="IPR002429">
    <property type="entry name" value="CcO_II-like_C"/>
</dbReference>
<dbReference type="InterPro" id="IPR034210">
    <property type="entry name" value="CcO_II_C"/>
</dbReference>
<dbReference type="InterPro" id="IPR001505">
    <property type="entry name" value="Copper_CuA"/>
</dbReference>
<dbReference type="InterPro" id="IPR008972">
    <property type="entry name" value="Cupredoxin"/>
</dbReference>
<dbReference type="InterPro" id="IPR011759">
    <property type="entry name" value="Cyt_c_oxidase_su2_TM_dom"/>
</dbReference>
<dbReference type="InterPro" id="IPR036257">
    <property type="entry name" value="Cyt_c_oxidase_su2_TM_sf"/>
</dbReference>
<dbReference type="PANTHER" id="PTHR22888:SF9">
    <property type="entry name" value="CYTOCHROME C OXIDASE SUBUNIT 2"/>
    <property type="match status" value="1"/>
</dbReference>
<dbReference type="PANTHER" id="PTHR22888">
    <property type="entry name" value="CYTOCHROME C OXIDASE, SUBUNIT II"/>
    <property type="match status" value="1"/>
</dbReference>
<dbReference type="Pfam" id="PF00116">
    <property type="entry name" value="COX2"/>
    <property type="match status" value="1"/>
</dbReference>
<dbReference type="Pfam" id="PF02790">
    <property type="entry name" value="COX2_TM"/>
    <property type="match status" value="1"/>
</dbReference>
<dbReference type="PRINTS" id="PR01166">
    <property type="entry name" value="CYCOXIDASEII"/>
</dbReference>
<dbReference type="SUPFAM" id="SSF49503">
    <property type="entry name" value="Cupredoxins"/>
    <property type="match status" value="1"/>
</dbReference>
<dbReference type="SUPFAM" id="SSF81464">
    <property type="entry name" value="Cytochrome c oxidase subunit II-like, transmembrane region"/>
    <property type="match status" value="1"/>
</dbReference>
<dbReference type="PROSITE" id="PS00078">
    <property type="entry name" value="COX2"/>
    <property type="match status" value="1"/>
</dbReference>
<dbReference type="PROSITE" id="PS50857">
    <property type="entry name" value="COX2_CUA"/>
    <property type="match status" value="1"/>
</dbReference>
<dbReference type="PROSITE" id="PS50999">
    <property type="entry name" value="COX2_TM"/>
    <property type="match status" value="1"/>
</dbReference>
<evidence type="ECO:0000250" key="1">
    <source>
        <dbReference type="UniProtKB" id="P00410"/>
    </source>
</evidence>
<evidence type="ECO:0000255" key="2"/>
<evidence type="ECO:0000305" key="3"/>
<gene>
    <name type="primary">COII</name>
</gene>
<sequence>MSTWGQMNLMDPASPIQIEMMLFHDHAMAILIGIFTLVSCLGVKLCFNTLSTRTMHEAQLLETLWTILPAFLLVWLALPSLRLLYLLDEQSSEGIVLKAIGHQWYWSYEMPSMNVSSIDSYMIPEDDLKPGEYRLLEVDNRPTVPYGMDINVIATSADVIHAWALPSMGVKMDAVPGRLNSMGFHANLPGIYYGQCSEICGANHSFMPIAIEAVDVKDFINMCN</sequence>
<organism>
    <name type="scientific">Albinaria turrita</name>
    <name type="common">Door snail</name>
    <name type="synonym">Clausilia turrita</name>
    <dbReference type="NCBI Taxonomy" id="27820"/>
    <lineage>
        <taxon>Eukaryota</taxon>
        <taxon>Metazoa</taxon>
        <taxon>Spiralia</taxon>
        <taxon>Lophotrochozoa</taxon>
        <taxon>Mollusca</taxon>
        <taxon>Gastropoda</taxon>
        <taxon>Heterobranchia</taxon>
        <taxon>Euthyneura</taxon>
        <taxon>Panpulmonata</taxon>
        <taxon>Eupulmonata</taxon>
        <taxon>Stylommatophora</taxon>
        <taxon>Helicina</taxon>
        <taxon>Clausilioidea</taxon>
        <taxon>Clausiliidae</taxon>
        <taxon>Alopiinae</taxon>
        <taxon>Albinaria</taxon>
    </lineage>
</organism>
<keyword id="KW-0186">Copper</keyword>
<keyword id="KW-0249">Electron transport</keyword>
<keyword id="KW-0460">Magnesium</keyword>
<keyword id="KW-0472">Membrane</keyword>
<keyword id="KW-0479">Metal-binding</keyword>
<keyword id="KW-0496">Mitochondrion</keyword>
<keyword id="KW-0999">Mitochondrion inner membrane</keyword>
<keyword id="KW-0679">Respiratory chain</keyword>
<keyword id="KW-1278">Translocase</keyword>
<keyword id="KW-0812">Transmembrane</keyword>
<keyword id="KW-1133">Transmembrane helix</keyword>
<keyword id="KW-0813">Transport</keyword>
<proteinExistence type="inferred from homology"/>
<accession>Q09334</accession>
<feature type="chain" id="PRO_0000183488" description="Cytochrome c oxidase subunit 2">
    <location>
        <begin position="1"/>
        <end position="224"/>
    </location>
</feature>
<feature type="topological domain" description="Mitochondrial intermembrane" evidence="2">
    <location>
        <begin position="1"/>
        <end position="26"/>
    </location>
</feature>
<feature type="transmembrane region" description="Helical" evidence="3">
    <location>
        <begin position="27"/>
        <end position="48"/>
    </location>
</feature>
<feature type="topological domain" description="Mitochondrial matrix" evidence="2">
    <location>
        <begin position="49"/>
        <end position="62"/>
    </location>
</feature>
<feature type="transmembrane region" description="Helical" evidence="3">
    <location>
        <begin position="63"/>
        <end position="82"/>
    </location>
</feature>
<feature type="topological domain" description="Mitochondrial intermembrane" evidence="2">
    <location>
        <begin position="83"/>
        <end position="224"/>
    </location>
</feature>
<feature type="binding site" evidence="1">
    <location>
        <position position="161"/>
    </location>
    <ligand>
        <name>Cu cation</name>
        <dbReference type="ChEBI" id="CHEBI:23378"/>
        <label>A1</label>
    </ligand>
</feature>
<feature type="binding site" evidence="1">
    <location>
        <position position="196"/>
    </location>
    <ligand>
        <name>Cu cation</name>
        <dbReference type="ChEBI" id="CHEBI:23378"/>
        <label>A1</label>
    </ligand>
</feature>
<feature type="binding site" evidence="1">
    <location>
        <position position="196"/>
    </location>
    <ligand>
        <name>Cu cation</name>
        <dbReference type="ChEBI" id="CHEBI:23378"/>
        <label>A2</label>
    </ligand>
</feature>
<feature type="binding site" evidence="1">
    <location>
        <position position="198"/>
    </location>
    <ligand>
        <name>Cu cation</name>
        <dbReference type="ChEBI" id="CHEBI:23378"/>
        <label>A2</label>
    </ligand>
</feature>
<feature type="binding site" evidence="1">
    <location>
        <position position="198"/>
    </location>
    <ligand>
        <name>Mg(2+)</name>
        <dbReference type="ChEBI" id="CHEBI:18420"/>
        <note>ligand shared with subunit 1</note>
    </ligand>
</feature>
<feature type="binding site" evidence="1">
    <location>
        <position position="200"/>
    </location>
    <ligand>
        <name>Cu cation</name>
        <dbReference type="ChEBI" id="CHEBI:23378"/>
        <label>A1</label>
    </ligand>
</feature>
<feature type="binding site" evidence="1">
    <location>
        <position position="200"/>
    </location>
    <ligand>
        <name>Cu cation</name>
        <dbReference type="ChEBI" id="CHEBI:23378"/>
        <label>A2</label>
    </ligand>
</feature>
<feature type="binding site" evidence="1">
    <location>
        <position position="204"/>
    </location>
    <ligand>
        <name>Cu cation</name>
        <dbReference type="ChEBI" id="CHEBI:23378"/>
        <label>A2</label>
    </ligand>
</feature>
<feature type="binding site" evidence="1">
    <location>
        <position position="207"/>
    </location>
    <ligand>
        <name>Cu cation</name>
        <dbReference type="ChEBI" id="CHEBI:23378"/>
        <label>A1</label>
    </ligand>
</feature>
<protein>
    <recommendedName>
        <fullName>Cytochrome c oxidase subunit 2</fullName>
        <ecNumber>7.1.1.9</ecNumber>
    </recommendedName>
    <alternativeName>
        <fullName>Cytochrome c oxidase polypeptide II</fullName>
    </alternativeName>
</protein>
<geneLocation type="mitochondrion"/>